<protein>
    <recommendedName>
        <fullName evidence="1">4-hydroxy-tetrahydrodipicolinate reductase</fullName>
        <shortName evidence="1">HTPA reductase</shortName>
        <ecNumber evidence="1">1.17.1.8</ecNumber>
    </recommendedName>
</protein>
<proteinExistence type="inferred from homology"/>
<name>DAPB_STAAS</name>
<gene>
    <name evidence="1" type="primary">dapB</name>
    <name type="ordered locus">SAS1337</name>
</gene>
<keyword id="KW-0028">Amino-acid biosynthesis</keyword>
<keyword id="KW-0963">Cytoplasm</keyword>
<keyword id="KW-0220">Diaminopimelate biosynthesis</keyword>
<keyword id="KW-0457">Lysine biosynthesis</keyword>
<keyword id="KW-0520">NAD</keyword>
<keyword id="KW-0521">NADP</keyword>
<keyword id="KW-0560">Oxidoreductase</keyword>
<dbReference type="EC" id="1.17.1.8" evidence="1"/>
<dbReference type="EMBL" id="BX571857">
    <property type="protein sequence ID" value="CAG43113.1"/>
    <property type="molecule type" value="Genomic_DNA"/>
</dbReference>
<dbReference type="RefSeq" id="WP_000698229.1">
    <property type="nucleotide sequence ID" value="NC_002953.3"/>
</dbReference>
<dbReference type="SMR" id="Q6G9G5"/>
<dbReference type="KEGG" id="sas:SAS1337"/>
<dbReference type="HOGENOM" id="CLU_047479_2_2_9"/>
<dbReference type="UniPathway" id="UPA00034">
    <property type="reaction ID" value="UER00018"/>
</dbReference>
<dbReference type="GO" id="GO:0005829">
    <property type="term" value="C:cytosol"/>
    <property type="evidence" value="ECO:0007669"/>
    <property type="project" value="TreeGrafter"/>
</dbReference>
<dbReference type="GO" id="GO:0008839">
    <property type="term" value="F:4-hydroxy-tetrahydrodipicolinate reductase"/>
    <property type="evidence" value="ECO:0007669"/>
    <property type="project" value="UniProtKB-EC"/>
</dbReference>
<dbReference type="GO" id="GO:0051287">
    <property type="term" value="F:NAD binding"/>
    <property type="evidence" value="ECO:0007669"/>
    <property type="project" value="UniProtKB-UniRule"/>
</dbReference>
<dbReference type="GO" id="GO:0050661">
    <property type="term" value="F:NADP binding"/>
    <property type="evidence" value="ECO:0007669"/>
    <property type="project" value="UniProtKB-UniRule"/>
</dbReference>
<dbReference type="GO" id="GO:0016726">
    <property type="term" value="F:oxidoreductase activity, acting on CH or CH2 groups, NAD or NADP as acceptor"/>
    <property type="evidence" value="ECO:0007669"/>
    <property type="project" value="UniProtKB-UniRule"/>
</dbReference>
<dbReference type="GO" id="GO:0019877">
    <property type="term" value="P:diaminopimelate biosynthetic process"/>
    <property type="evidence" value="ECO:0007669"/>
    <property type="project" value="UniProtKB-UniRule"/>
</dbReference>
<dbReference type="GO" id="GO:0009089">
    <property type="term" value="P:lysine biosynthetic process via diaminopimelate"/>
    <property type="evidence" value="ECO:0007669"/>
    <property type="project" value="UniProtKB-UniRule"/>
</dbReference>
<dbReference type="CDD" id="cd02274">
    <property type="entry name" value="DHDPR_N"/>
    <property type="match status" value="1"/>
</dbReference>
<dbReference type="FunFam" id="3.30.360.10:FF:000009">
    <property type="entry name" value="4-hydroxy-tetrahydrodipicolinate reductase"/>
    <property type="match status" value="1"/>
</dbReference>
<dbReference type="Gene3D" id="3.30.360.10">
    <property type="entry name" value="Dihydrodipicolinate Reductase, domain 2"/>
    <property type="match status" value="1"/>
</dbReference>
<dbReference type="Gene3D" id="3.40.50.720">
    <property type="entry name" value="NAD(P)-binding Rossmann-like Domain"/>
    <property type="match status" value="1"/>
</dbReference>
<dbReference type="HAMAP" id="MF_00102">
    <property type="entry name" value="DapB"/>
    <property type="match status" value="1"/>
</dbReference>
<dbReference type="InterPro" id="IPR022663">
    <property type="entry name" value="DapB_C"/>
</dbReference>
<dbReference type="InterPro" id="IPR000846">
    <property type="entry name" value="DapB_N"/>
</dbReference>
<dbReference type="InterPro" id="IPR022664">
    <property type="entry name" value="DapB_N_CS"/>
</dbReference>
<dbReference type="InterPro" id="IPR023940">
    <property type="entry name" value="DHDPR_bac"/>
</dbReference>
<dbReference type="InterPro" id="IPR036291">
    <property type="entry name" value="NAD(P)-bd_dom_sf"/>
</dbReference>
<dbReference type="NCBIfam" id="TIGR00036">
    <property type="entry name" value="dapB"/>
    <property type="match status" value="1"/>
</dbReference>
<dbReference type="PANTHER" id="PTHR20836:SF7">
    <property type="entry name" value="4-HYDROXY-TETRAHYDRODIPICOLINATE REDUCTASE"/>
    <property type="match status" value="1"/>
</dbReference>
<dbReference type="PANTHER" id="PTHR20836">
    <property type="entry name" value="DIHYDRODIPICOLINATE REDUCTASE"/>
    <property type="match status" value="1"/>
</dbReference>
<dbReference type="Pfam" id="PF05173">
    <property type="entry name" value="DapB_C"/>
    <property type="match status" value="1"/>
</dbReference>
<dbReference type="Pfam" id="PF01113">
    <property type="entry name" value="DapB_N"/>
    <property type="match status" value="1"/>
</dbReference>
<dbReference type="PIRSF" id="PIRSF000161">
    <property type="entry name" value="DHPR"/>
    <property type="match status" value="1"/>
</dbReference>
<dbReference type="SUPFAM" id="SSF55347">
    <property type="entry name" value="Glyceraldehyde-3-phosphate dehydrogenase-like, C-terminal domain"/>
    <property type="match status" value="1"/>
</dbReference>
<dbReference type="SUPFAM" id="SSF51735">
    <property type="entry name" value="NAD(P)-binding Rossmann-fold domains"/>
    <property type="match status" value="1"/>
</dbReference>
<dbReference type="PROSITE" id="PS01298">
    <property type="entry name" value="DAPB"/>
    <property type="match status" value="1"/>
</dbReference>
<sequence>MKILLIGYGAMNQRVARLAEEKGHEIVGVIENTPKATTPYQQYQHIADVKDADVAIDFSNPNLLFPLLDEEFHLPLVVATTGEKEKLLNKLDELSQNIPVFFSANMSYGVHALTKILAAAVPLLDEFDIELTEAHHNKKVDAPSGTLEKLYDVIVSLKENVTPVYDRHELNEKRQPQDIGIHSIRGGTIVGEHEVLFAGTDETIQITHRAQSKDIFANGAIQAAERLVNKPNGFYTFDNL</sequence>
<accession>Q6G9G5</accession>
<evidence type="ECO:0000255" key="1">
    <source>
        <dbReference type="HAMAP-Rule" id="MF_00102"/>
    </source>
</evidence>
<evidence type="ECO:0000305" key="2"/>
<comment type="function">
    <text evidence="1">Catalyzes the conversion of 4-hydroxy-tetrahydrodipicolinate (HTPA) to tetrahydrodipicolinate.</text>
</comment>
<comment type="catalytic activity">
    <reaction evidence="1">
        <text>(S)-2,3,4,5-tetrahydrodipicolinate + NAD(+) + H2O = (2S,4S)-4-hydroxy-2,3,4,5-tetrahydrodipicolinate + NADH + H(+)</text>
        <dbReference type="Rhea" id="RHEA:35323"/>
        <dbReference type="ChEBI" id="CHEBI:15377"/>
        <dbReference type="ChEBI" id="CHEBI:15378"/>
        <dbReference type="ChEBI" id="CHEBI:16845"/>
        <dbReference type="ChEBI" id="CHEBI:57540"/>
        <dbReference type="ChEBI" id="CHEBI:57945"/>
        <dbReference type="ChEBI" id="CHEBI:67139"/>
        <dbReference type="EC" id="1.17.1.8"/>
    </reaction>
</comment>
<comment type="catalytic activity">
    <reaction evidence="1">
        <text>(S)-2,3,4,5-tetrahydrodipicolinate + NADP(+) + H2O = (2S,4S)-4-hydroxy-2,3,4,5-tetrahydrodipicolinate + NADPH + H(+)</text>
        <dbReference type="Rhea" id="RHEA:35331"/>
        <dbReference type="ChEBI" id="CHEBI:15377"/>
        <dbReference type="ChEBI" id="CHEBI:15378"/>
        <dbReference type="ChEBI" id="CHEBI:16845"/>
        <dbReference type="ChEBI" id="CHEBI:57783"/>
        <dbReference type="ChEBI" id="CHEBI:58349"/>
        <dbReference type="ChEBI" id="CHEBI:67139"/>
        <dbReference type="EC" id="1.17.1.8"/>
    </reaction>
</comment>
<comment type="pathway">
    <text evidence="1">Amino-acid biosynthesis; L-lysine biosynthesis via DAP pathway; (S)-tetrahydrodipicolinate from L-aspartate: step 4/4.</text>
</comment>
<comment type="subcellular location">
    <subcellularLocation>
        <location evidence="1">Cytoplasm</location>
    </subcellularLocation>
</comment>
<comment type="similarity">
    <text evidence="1">Belongs to the DapB family.</text>
</comment>
<comment type="caution">
    <text evidence="2">Was originally thought to be a dihydrodipicolinate reductase (DHDPR), catalyzing the conversion of dihydrodipicolinate to tetrahydrodipicolinate. However, it was shown in E.coli that the substrate of the enzymatic reaction is not dihydrodipicolinate (DHDP) but in fact (2S,4S)-4-hydroxy-2,3,4,5-tetrahydrodipicolinic acid (HTPA), the product released by the DapA-catalyzed reaction.</text>
</comment>
<reference key="1">
    <citation type="journal article" date="2004" name="Proc. Natl. Acad. Sci. U.S.A.">
        <title>Complete genomes of two clinical Staphylococcus aureus strains: evidence for the rapid evolution of virulence and drug resistance.</title>
        <authorList>
            <person name="Holden M.T.G."/>
            <person name="Feil E.J."/>
            <person name="Lindsay J.A."/>
            <person name="Peacock S.J."/>
            <person name="Day N.P.J."/>
            <person name="Enright M.C."/>
            <person name="Foster T.J."/>
            <person name="Moore C.E."/>
            <person name="Hurst L."/>
            <person name="Atkin R."/>
            <person name="Barron A."/>
            <person name="Bason N."/>
            <person name="Bentley S.D."/>
            <person name="Chillingworth C."/>
            <person name="Chillingworth T."/>
            <person name="Churcher C."/>
            <person name="Clark L."/>
            <person name="Corton C."/>
            <person name="Cronin A."/>
            <person name="Doggett J."/>
            <person name="Dowd L."/>
            <person name="Feltwell T."/>
            <person name="Hance Z."/>
            <person name="Harris B."/>
            <person name="Hauser H."/>
            <person name="Holroyd S."/>
            <person name="Jagels K."/>
            <person name="James K.D."/>
            <person name="Lennard N."/>
            <person name="Line A."/>
            <person name="Mayes R."/>
            <person name="Moule S."/>
            <person name="Mungall K."/>
            <person name="Ormond D."/>
            <person name="Quail M.A."/>
            <person name="Rabbinowitsch E."/>
            <person name="Rutherford K.M."/>
            <person name="Sanders M."/>
            <person name="Sharp S."/>
            <person name="Simmonds M."/>
            <person name="Stevens K."/>
            <person name="Whitehead S."/>
            <person name="Barrell B.G."/>
            <person name="Spratt B.G."/>
            <person name="Parkhill J."/>
        </authorList>
    </citation>
    <scope>NUCLEOTIDE SEQUENCE [LARGE SCALE GENOMIC DNA]</scope>
    <source>
        <strain>MSSA476</strain>
    </source>
</reference>
<feature type="chain" id="PRO_0000141489" description="4-hydroxy-tetrahydrodipicolinate reductase">
    <location>
        <begin position="1"/>
        <end position="240"/>
    </location>
</feature>
<feature type="active site" description="Proton donor/acceptor" evidence="1">
    <location>
        <position position="135"/>
    </location>
</feature>
<feature type="active site" description="Proton donor" evidence="1">
    <location>
        <position position="139"/>
    </location>
</feature>
<feature type="binding site" evidence="1">
    <location>
        <begin position="79"/>
        <end position="81"/>
    </location>
    <ligand>
        <name>NAD(+)</name>
        <dbReference type="ChEBI" id="CHEBI:57540"/>
    </ligand>
</feature>
<feature type="binding site" evidence="1">
    <location>
        <begin position="103"/>
        <end position="106"/>
    </location>
    <ligand>
        <name>NAD(+)</name>
        <dbReference type="ChEBI" id="CHEBI:57540"/>
    </ligand>
</feature>
<feature type="binding site" evidence="1">
    <location>
        <position position="136"/>
    </location>
    <ligand>
        <name>(S)-2,3,4,5-tetrahydrodipicolinate</name>
        <dbReference type="ChEBI" id="CHEBI:16845"/>
    </ligand>
</feature>
<feature type="binding site" evidence="1">
    <location>
        <begin position="145"/>
        <end position="146"/>
    </location>
    <ligand>
        <name>(S)-2,3,4,5-tetrahydrodipicolinate</name>
        <dbReference type="ChEBI" id="CHEBI:16845"/>
    </ligand>
</feature>
<organism>
    <name type="scientific">Staphylococcus aureus (strain MSSA476)</name>
    <dbReference type="NCBI Taxonomy" id="282459"/>
    <lineage>
        <taxon>Bacteria</taxon>
        <taxon>Bacillati</taxon>
        <taxon>Bacillota</taxon>
        <taxon>Bacilli</taxon>
        <taxon>Bacillales</taxon>
        <taxon>Staphylococcaceae</taxon>
        <taxon>Staphylococcus</taxon>
    </lineage>
</organism>